<protein>
    <recommendedName>
        <fullName evidence="1">N-(5'-phosphoribosyl)anthranilate isomerase</fullName>
        <shortName evidence="1">PRAI</shortName>
        <ecNumber evidence="1">5.3.1.24</ecNumber>
    </recommendedName>
</protein>
<gene>
    <name evidence="1" type="primary">trpF</name>
    <name type="ordered locus">MXAN_6064</name>
</gene>
<proteinExistence type="inferred from homology"/>
<reference key="1">
    <citation type="journal article" date="2006" name="Proc. Natl. Acad. Sci. U.S.A.">
        <title>Evolution of sensory complexity recorded in a myxobacterial genome.</title>
        <authorList>
            <person name="Goldman B.S."/>
            <person name="Nierman W.C."/>
            <person name="Kaiser D."/>
            <person name="Slater S.C."/>
            <person name="Durkin A.S."/>
            <person name="Eisen J.A."/>
            <person name="Ronning C.M."/>
            <person name="Barbazuk W.B."/>
            <person name="Blanchard M."/>
            <person name="Field C."/>
            <person name="Halling C."/>
            <person name="Hinkle G."/>
            <person name="Iartchuk O."/>
            <person name="Kim H.S."/>
            <person name="Mackenzie C."/>
            <person name="Madupu R."/>
            <person name="Miller N."/>
            <person name="Shvartsbeyn A."/>
            <person name="Sullivan S.A."/>
            <person name="Vaudin M."/>
            <person name="Wiegand R."/>
            <person name="Kaplan H.B."/>
        </authorList>
    </citation>
    <scope>NUCLEOTIDE SEQUENCE [LARGE SCALE GENOMIC DNA]</scope>
    <source>
        <strain>DK1622</strain>
    </source>
</reference>
<comment type="catalytic activity">
    <reaction evidence="1">
        <text>N-(5-phospho-beta-D-ribosyl)anthranilate = 1-(2-carboxyphenylamino)-1-deoxy-D-ribulose 5-phosphate</text>
        <dbReference type="Rhea" id="RHEA:21540"/>
        <dbReference type="ChEBI" id="CHEBI:18277"/>
        <dbReference type="ChEBI" id="CHEBI:58613"/>
        <dbReference type="EC" id="5.3.1.24"/>
    </reaction>
</comment>
<comment type="pathway">
    <text evidence="1">Amino-acid biosynthesis; L-tryptophan biosynthesis; L-tryptophan from chorismate: step 3/5.</text>
</comment>
<comment type="similarity">
    <text evidence="1">Belongs to the TrpF family.</text>
</comment>
<name>TRPF_MYXXD</name>
<keyword id="KW-0028">Amino-acid biosynthesis</keyword>
<keyword id="KW-0057">Aromatic amino acid biosynthesis</keyword>
<keyword id="KW-0413">Isomerase</keyword>
<keyword id="KW-1185">Reference proteome</keyword>
<keyword id="KW-0822">Tryptophan biosynthesis</keyword>
<accession>Q1CZH4</accession>
<evidence type="ECO:0000255" key="1">
    <source>
        <dbReference type="HAMAP-Rule" id="MF_00135"/>
    </source>
</evidence>
<sequence length="212" mass="21633">MSVRVKVCGVTRLSDAVAAWEAGVDALGLNFYPKSPRYLDLPTAAALARTRPPLGTVLGVFVNAAPDTIRETVRACGLTAVQLHGDEPPEACSGYGVPVIKALRVTGPEDVVRARTYVGVGDVAGLLLDGAAPGYGGGGVGFDWSLVAGLAGSGVPVLVAGGLRPSNVAEAVRATRPYGVDVASGVESAPGIKDVEAVRAFVRAAKSINLWE</sequence>
<feature type="chain" id="PRO_1000018611" description="N-(5'-phosphoribosyl)anthranilate isomerase">
    <location>
        <begin position="1"/>
        <end position="212"/>
    </location>
</feature>
<dbReference type="EC" id="5.3.1.24" evidence="1"/>
<dbReference type="EMBL" id="CP000113">
    <property type="protein sequence ID" value="ABF91277.1"/>
    <property type="molecule type" value="Genomic_DNA"/>
</dbReference>
<dbReference type="RefSeq" id="WP_011556013.1">
    <property type="nucleotide sequence ID" value="NC_008095.1"/>
</dbReference>
<dbReference type="SMR" id="Q1CZH4"/>
<dbReference type="STRING" id="246197.MXAN_6064"/>
<dbReference type="EnsemblBacteria" id="ABF91277">
    <property type="protein sequence ID" value="ABF91277"/>
    <property type="gene ID" value="MXAN_6064"/>
</dbReference>
<dbReference type="GeneID" id="41363300"/>
<dbReference type="KEGG" id="mxa:MXAN_6064"/>
<dbReference type="eggNOG" id="COG0135">
    <property type="taxonomic scope" value="Bacteria"/>
</dbReference>
<dbReference type="HOGENOM" id="CLU_076364_2_0_7"/>
<dbReference type="OrthoDB" id="9796196at2"/>
<dbReference type="UniPathway" id="UPA00035">
    <property type="reaction ID" value="UER00042"/>
</dbReference>
<dbReference type="Proteomes" id="UP000002402">
    <property type="component" value="Chromosome"/>
</dbReference>
<dbReference type="GO" id="GO:0004640">
    <property type="term" value="F:phosphoribosylanthranilate isomerase activity"/>
    <property type="evidence" value="ECO:0007669"/>
    <property type="project" value="UniProtKB-UniRule"/>
</dbReference>
<dbReference type="GO" id="GO:0000162">
    <property type="term" value="P:L-tryptophan biosynthetic process"/>
    <property type="evidence" value="ECO:0007669"/>
    <property type="project" value="UniProtKB-UniRule"/>
</dbReference>
<dbReference type="CDD" id="cd00405">
    <property type="entry name" value="PRAI"/>
    <property type="match status" value="1"/>
</dbReference>
<dbReference type="Gene3D" id="3.20.20.70">
    <property type="entry name" value="Aldolase class I"/>
    <property type="match status" value="1"/>
</dbReference>
<dbReference type="HAMAP" id="MF_00135">
    <property type="entry name" value="PRAI"/>
    <property type="match status" value="1"/>
</dbReference>
<dbReference type="InterPro" id="IPR013785">
    <property type="entry name" value="Aldolase_TIM"/>
</dbReference>
<dbReference type="InterPro" id="IPR001240">
    <property type="entry name" value="PRAI_dom"/>
</dbReference>
<dbReference type="InterPro" id="IPR011060">
    <property type="entry name" value="RibuloseP-bd_barrel"/>
</dbReference>
<dbReference type="InterPro" id="IPR044643">
    <property type="entry name" value="TrpF_fam"/>
</dbReference>
<dbReference type="NCBIfam" id="NF002298">
    <property type="entry name" value="PRK01222.1-4"/>
    <property type="match status" value="1"/>
</dbReference>
<dbReference type="PANTHER" id="PTHR42894">
    <property type="entry name" value="N-(5'-PHOSPHORIBOSYL)ANTHRANILATE ISOMERASE"/>
    <property type="match status" value="1"/>
</dbReference>
<dbReference type="PANTHER" id="PTHR42894:SF1">
    <property type="entry name" value="N-(5'-PHOSPHORIBOSYL)ANTHRANILATE ISOMERASE"/>
    <property type="match status" value="1"/>
</dbReference>
<dbReference type="Pfam" id="PF00697">
    <property type="entry name" value="PRAI"/>
    <property type="match status" value="1"/>
</dbReference>
<dbReference type="SUPFAM" id="SSF51366">
    <property type="entry name" value="Ribulose-phoshate binding barrel"/>
    <property type="match status" value="1"/>
</dbReference>
<organism>
    <name type="scientific">Myxococcus xanthus (strain DK1622)</name>
    <dbReference type="NCBI Taxonomy" id="246197"/>
    <lineage>
        <taxon>Bacteria</taxon>
        <taxon>Pseudomonadati</taxon>
        <taxon>Myxococcota</taxon>
        <taxon>Myxococcia</taxon>
        <taxon>Myxococcales</taxon>
        <taxon>Cystobacterineae</taxon>
        <taxon>Myxococcaceae</taxon>
        <taxon>Myxococcus</taxon>
    </lineage>
</organism>